<accession>Q4G063</accession>
<name>CREL2_RAT</name>
<gene>
    <name type="primary">Creld2</name>
</gene>
<organism>
    <name type="scientific">Rattus norvegicus</name>
    <name type="common">Rat</name>
    <dbReference type="NCBI Taxonomy" id="10116"/>
    <lineage>
        <taxon>Eukaryota</taxon>
        <taxon>Metazoa</taxon>
        <taxon>Chordata</taxon>
        <taxon>Craniata</taxon>
        <taxon>Vertebrata</taxon>
        <taxon>Euteleostomi</taxon>
        <taxon>Mammalia</taxon>
        <taxon>Eutheria</taxon>
        <taxon>Euarchontoglires</taxon>
        <taxon>Glires</taxon>
        <taxon>Rodentia</taxon>
        <taxon>Myomorpha</taxon>
        <taxon>Muroidea</taxon>
        <taxon>Muridae</taxon>
        <taxon>Murinae</taxon>
        <taxon>Rattus</taxon>
    </lineage>
</organism>
<keyword id="KW-0106">Calcium</keyword>
<keyword id="KW-1015">Disulfide bond</keyword>
<keyword id="KW-0245">EGF-like domain</keyword>
<keyword id="KW-0256">Endoplasmic reticulum</keyword>
<keyword id="KW-0325">Glycoprotein</keyword>
<keyword id="KW-0413">Isomerase</keyword>
<keyword id="KW-0676">Redox-active center</keyword>
<keyword id="KW-1185">Reference proteome</keyword>
<keyword id="KW-0677">Repeat</keyword>
<keyword id="KW-0732">Signal</keyword>
<sequence length="349" mass="38251">MHLLLAAGFGLLLLLLPPPAASKKPTQCQRCRTLVDKFNQGMANTARKNFGGGNTAWEEKTLSKYEFSEIRLLEIMEGLCDSSDFECNQLLEQQEEQLEAWWQSLKKDYPNLFEWFCVRTLKACCLPGTYGPDCKECQGGSERPCSGNGYCSGDGSRQGDGSCQCHAGYKGPLCIDCMDGYFSLQRNETHSICLACDESCKTCSGPSNKDCVQCEVGWARVEDACVDVDECAAETPPCSEAQYCENVNGSYICEECDSTCVGCTGKGPANCKECIAGYTKQSGQCADIDECSLEEKACKRRNENCYNVPGSFVCVCPDGFEETEDACVQTAQSEVTEENPTQPLSHEDL</sequence>
<reference key="1">
    <citation type="journal article" date="2004" name="Genome Res.">
        <title>The status, quality, and expansion of the NIH full-length cDNA project: the Mammalian Gene Collection (MGC).</title>
        <authorList>
            <consortium name="The MGC Project Team"/>
        </authorList>
    </citation>
    <scope>NUCLEOTIDE SEQUENCE [LARGE SCALE MRNA]</scope>
    <source>
        <tissue>Liver</tissue>
    </source>
</reference>
<reference key="2">
    <citation type="journal article" date="2005" name="J. Neurochem.">
        <title>The cysteine-rich with EGF-like domains 2 (CRELD2) protein interacts with the large cytoplasmic domain of human neuronal nicotinic acetylcholine receptor alpha4 and beta2 subunits.</title>
        <authorList>
            <person name="Ortiz J.A."/>
            <person name="Castillo M."/>
            <person name="Dominguez del Toro E."/>
            <person name="Mulet J."/>
            <person name="Gerber S."/>
            <person name="Valor L.M."/>
            <person name="Sala S."/>
            <person name="Sala F."/>
            <person name="Gutierrez L.M."/>
            <person name="Criado M."/>
        </authorList>
    </citation>
    <scope>TISSUE SPECIFICITY</scope>
</reference>
<proteinExistence type="evidence at protein level"/>
<feature type="signal peptide" evidence="3">
    <location>
        <begin position="1"/>
        <end position="22"/>
    </location>
</feature>
<feature type="chain" id="PRO_0000256247" description="Protein disulfide isomerase Creld2">
    <location>
        <begin position="23"/>
        <end position="349"/>
    </location>
</feature>
<feature type="domain" description="EGF-like 1" evidence="4">
    <location>
        <begin position="133"/>
        <end position="175"/>
    </location>
</feature>
<feature type="repeat" description="FU 1">
    <location>
        <begin position="190"/>
        <end position="237"/>
    </location>
</feature>
<feature type="repeat" description="FU 2">
    <location>
        <begin position="250"/>
        <end position="297"/>
    </location>
</feature>
<feature type="domain" description="EGF-like 2; calcium-binding" evidence="4">
    <location>
        <begin position="287"/>
        <end position="328"/>
    </location>
</feature>
<feature type="short sequence motif" description="CXXC" evidence="2">
    <location>
        <begin position="28"/>
        <end position="31"/>
    </location>
</feature>
<feature type="short sequence motif" description="CXXC" evidence="2">
    <location>
        <begin position="260"/>
        <end position="263"/>
    </location>
</feature>
<feature type="glycosylation site" description="N-linked (GlcNAc...) asparagine" evidence="3">
    <location>
        <position position="187"/>
    </location>
</feature>
<feature type="glycosylation site" description="N-linked (GlcNAc...) asparagine" evidence="3">
    <location>
        <position position="248"/>
    </location>
</feature>
<feature type="disulfide bond" description="Redox-active" evidence="2">
    <location>
        <begin position="28"/>
        <end position="31"/>
    </location>
</feature>
<feature type="disulfide bond" evidence="4">
    <location>
        <begin position="137"/>
        <end position="151"/>
    </location>
</feature>
<feature type="disulfide bond" evidence="4">
    <location>
        <begin position="145"/>
        <end position="163"/>
    </location>
</feature>
<feature type="disulfide bond" evidence="4">
    <location>
        <begin position="165"/>
        <end position="174"/>
    </location>
</feature>
<feature type="disulfide bond" description="Redox-active" evidence="2">
    <location>
        <begin position="260"/>
        <end position="263"/>
    </location>
</feature>
<feature type="disulfide bond" evidence="4">
    <location>
        <begin position="291"/>
        <end position="305"/>
    </location>
</feature>
<feature type="disulfide bond" evidence="4">
    <location>
        <begin position="298"/>
        <end position="314"/>
    </location>
</feature>
<feature type="disulfide bond" evidence="4">
    <location>
        <begin position="316"/>
        <end position="327"/>
    </location>
</feature>
<comment type="function">
    <text evidence="1 2">Protein disulfide isomerase (By similarity). Might play a role in the unfolded protein response (By similarity). May regulate transport of alpha4-beta2 neuronal acetylcholine receptor (By similarity).</text>
</comment>
<comment type="catalytic activity">
    <reaction evidence="2">
        <text>Catalyzes the rearrangement of -S-S- bonds in proteins.</text>
        <dbReference type="EC" id="5.3.4.1"/>
    </reaction>
</comment>
<comment type="subunit">
    <text evidence="1 2">Interacts with Chrna4 (By similarity). Component of a complex containing at least Creld2, Manf, Matn3 and Pdia4 (By similarity).</text>
</comment>
<comment type="subcellular location">
    <subcellularLocation>
        <location evidence="1">Endoplasmic reticulum</location>
    </subcellularLocation>
</comment>
<comment type="tissue specificity">
    <text evidence="5">Broadly expressed in brain (at protein level).</text>
</comment>
<comment type="similarity">
    <text evidence="6">Belongs to the CRELD family.</text>
</comment>
<protein>
    <recommendedName>
        <fullName evidence="6">Protein disulfide isomerase Creld2</fullName>
        <ecNumber evidence="2">5.3.4.1</ecNumber>
    </recommendedName>
    <alternativeName>
        <fullName evidence="6">Cysteine-rich with EGF-like domain protein 2</fullName>
    </alternativeName>
</protein>
<evidence type="ECO:0000250" key="1">
    <source>
        <dbReference type="UniProtKB" id="Q6UXH1"/>
    </source>
</evidence>
<evidence type="ECO:0000250" key="2">
    <source>
        <dbReference type="UniProtKB" id="Q9CYA0"/>
    </source>
</evidence>
<evidence type="ECO:0000255" key="3"/>
<evidence type="ECO:0000255" key="4">
    <source>
        <dbReference type="PROSITE-ProRule" id="PRU00076"/>
    </source>
</evidence>
<evidence type="ECO:0000269" key="5">
    <source>
    </source>
</evidence>
<evidence type="ECO:0000305" key="6"/>
<dbReference type="EC" id="5.3.4.1" evidence="2"/>
<dbReference type="EMBL" id="BC098722">
    <property type="protein sequence ID" value="AAH98722.1"/>
    <property type="molecule type" value="mRNA"/>
</dbReference>
<dbReference type="RefSeq" id="NP_001032285.1">
    <property type="nucleotide sequence ID" value="NM_001037208.1"/>
</dbReference>
<dbReference type="RefSeq" id="XP_063120016.1">
    <property type="nucleotide sequence ID" value="XM_063263946.1"/>
</dbReference>
<dbReference type="FunCoup" id="Q4G063">
    <property type="interactions" value="1077"/>
</dbReference>
<dbReference type="STRING" id="10116.ENSRNOP00000006357"/>
<dbReference type="GlyCosmos" id="Q4G063">
    <property type="glycosylation" value="2 sites, No reported glycans"/>
</dbReference>
<dbReference type="GlyGen" id="Q4G063">
    <property type="glycosylation" value="2 sites"/>
</dbReference>
<dbReference type="iPTMnet" id="Q4G063"/>
<dbReference type="PhosphoSitePlus" id="Q4G063"/>
<dbReference type="PaxDb" id="10116-ENSRNOP00000006357"/>
<dbReference type="Ensembl" id="ENSRNOT00000006357.6">
    <property type="protein sequence ID" value="ENSRNOP00000006357.5"/>
    <property type="gene ID" value="ENSRNOG00000004659.6"/>
</dbReference>
<dbReference type="GeneID" id="362978"/>
<dbReference type="KEGG" id="rno:362978"/>
<dbReference type="AGR" id="RGD:1310614"/>
<dbReference type="CTD" id="79174"/>
<dbReference type="RGD" id="1310614">
    <property type="gene designation" value="Creld2"/>
</dbReference>
<dbReference type="eggNOG" id="KOG4260">
    <property type="taxonomic scope" value="Eukaryota"/>
</dbReference>
<dbReference type="GeneTree" id="ENSGT00940000160071"/>
<dbReference type="HOGENOM" id="CLU_038974_1_0_1"/>
<dbReference type="InParanoid" id="Q4G063"/>
<dbReference type="OMA" id="TDNFNKG"/>
<dbReference type="OrthoDB" id="19903at2759"/>
<dbReference type="PhylomeDB" id="Q4G063"/>
<dbReference type="TreeFam" id="TF316507"/>
<dbReference type="PRO" id="PR:Q4G063"/>
<dbReference type="Proteomes" id="UP000002494">
    <property type="component" value="Chromosome 7"/>
</dbReference>
<dbReference type="Bgee" id="ENSRNOG00000004659">
    <property type="expression patterns" value="Expressed in pancreas and 20 other cell types or tissues"/>
</dbReference>
<dbReference type="GO" id="GO:0005783">
    <property type="term" value="C:endoplasmic reticulum"/>
    <property type="evidence" value="ECO:0000266"/>
    <property type="project" value="RGD"/>
</dbReference>
<dbReference type="GO" id="GO:0005615">
    <property type="term" value="C:extracellular space"/>
    <property type="evidence" value="ECO:0000266"/>
    <property type="project" value="RGD"/>
</dbReference>
<dbReference type="GO" id="GO:0005794">
    <property type="term" value="C:Golgi apparatus"/>
    <property type="evidence" value="ECO:0000266"/>
    <property type="project" value="RGD"/>
</dbReference>
<dbReference type="GO" id="GO:0005509">
    <property type="term" value="F:calcium ion binding"/>
    <property type="evidence" value="ECO:0007669"/>
    <property type="project" value="InterPro"/>
</dbReference>
<dbReference type="GO" id="GO:0003756">
    <property type="term" value="F:protein disulfide isomerase activity"/>
    <property type="evidence" value="ECO:0007669"/>
    <property type="project" value="UniProtKB-EC"/>
</dbReference>
<dbReference type="CDD" id="cd00064">
    <property type="entry name" value="FU"/>
    <property type="match status" value="2"/>
</dbReference>
<dbReference type="FunFam" id="2.10.25.10:FF:000038">
    <property type="entry name" value="Fibrillin 2"/>
    <property type="match status" value="1"/>
</dbReference>
<dbReference type="Gene3D" id="2.10.220.10">
    <property type="entry name" value="Hormone Receptor, Insulin-like Growth Factor Receptor 1, Chain A, domain 2"/>
    <property type="match status" value="1"/>
</dbReference>
<dbReference type="Gene3D" id="2.10.25.10">
    <property type="entry name" value="Laminin"/>
    <property type="match status" value="1"/>
</dbReference>
<dbReference type="InterPro" id="IPR001881">
    <property type="entry name" value="EGF-like_Ca-bd_dom"/>
</dbReference>
<dbReference type="InterPro" id="IPR000742">
    <property type="entry name" value="EGF-like_dom"/>
</dbReference>
<dbReference type="InterPro" id="IPR000152">
    <property type="entry name" value="EGF-type_Asp/Asn_hydroxyl_site"/>
</dbReference>
<dbReference type="InterPro" id="IPR018097">
    <property type="entry name" value="EGF_Ca-bd_CS"/>
</dbReference>
<dbReference type="InterPro" id="IPR006212">
    <property type="entry name" value="Furin_repeat"/>
</dbReference>
<dbReference type="InterPro" id="IPR009030">
    <property type="entry name" value="Growth_fac_rcpt_cys_sf"/>
</dbReference>
<dbReference type="InterPro" id="IPR002049">
    <property type="entry name" value="LE_dom"/>
</dbReference>
<dbReference type="InterPro" id="IPR052235">
    <property type="entry name" value="Nephronectin_domain"/>
</dbReference>
<dbReference type="InterPro" id="IPR049883">
    <property type="entry name" value="NOTCH1_EGF-like"/>
</dbReference>
<dbReference type="PANTHER" id="PTHR24050">
    <property type="entry name" value="PA14 DOMAIN-CONTAINING PROTEIN"/>
    <property type="match status" value="1"/>
</dbReference>
<dbReference type="PANTHER" id="PTHR24050:SF28">
    <property type="entry name" value="UROMODULIN-LIKE"/>
    <property type="match status" value="1"/>
</dbReference>
<dbReference type="Pfam" id="PF07645">
    <property type="entry name" value="EGF_CA"/>
    <property type="match status" value="2"/>
</dbReference>
<dbReference type="SMART" id="SM00181">
    <property type="entry name" value="EGF"/>
    <property type="match status" value="4"/>
</dbReference>
<dbReference type="SMART" id="SM00179">
    <property type="entry name" value="EGF_CA"/>
    <property type="match status" value="2"/>
</dbReference>
<dbReference type="SMART" id="SM00261">
    <property type="entry name" value="FU"/>
    <property type="match status" value="2"/>
</dbReference>
<dbReference type="SUPFAM" id="SSF57184">
    <property type="entry name" value="Growth factor receptor domain"/>
    <property type="match status" value="1"/>
</dbReference>
<dbReference type="PROSITE" id="PS00010">
    <property type="entry name" value="ASX_HYDROXYL"/>
    <property type="match status" value="1"/>
</dbReference>
<dbReference type="PROSITE" id="PS00022">
    <property type="entry name" value="EGF_1"/>
    <property type="match status" value="1"/>
</dbReference>
<dbReference type="PROSITE" id="PS01186">
    <property type="entry name" value="EGF_2"/>
    <property type="match status" value="2"/>
</dbReference>
<dbReference type="PROSITE" id="PS50026">
    <property type="entry name" value="EGF_3"/>
    <property type="match status" value="2"/>
</dbReference>
<dbReference type="PROSITE" id="PS01187">
    <property type="entry name" value="EGF_CA"/>
    <property type="match status" value="2"/>
</dbReference>